<proteinExistence type="uncertain"/>
<name>HMOX3_RAT</name>
<protein>
    <recommendedName>
        <fullName>Putative heme oxygenase 3</fullName>
        <shortName>HO-3</shortName>
        <ecNumber evidence="1">1.14.14.18</ecNumber>
    </recommendedName>
</protein>
<organism>
    <name type="scientific">Rattus norvegicus</name>
    <name type="common">Rat</name>
    <dbReference type="NCBI Taxonomy" id="10116"/>
    <lineage>
        <taxon>Eukaryota</taxon>
        <taxon>Metazoa</taxon>
        <taxon>Chordata</taxon>
        <taxon>Craniata</taxon>
        <taxon>Vertebrata</taxon>
        <taxon>Euteleostomi</taxon>
        <taxon>Mammalia</taxon>
        <taxon>Eutheria</taxon>
        <taxon>Euarchontoglires</taxon>
        <taxon>Glires</taxon>
        <taxon>Rodentia</taxon>
        <taxon>Myomorpha</taxon>
        <taxon>Muroidea</taxon>
        <taxon>Muridae</taxon>
        <taxon>Murinae</taxon>
        <taxon>Rattus</taxon>
    </lineage>
</organism>
<comment type="function">
    <text>Heme oxygenase cleaves the heme ring at the alpha methene bridge to form biliverdin. Biliverdin is subsequently converted to bilirubin by biliverdin reductase. Heme oxygenase 3 could be implicated in some heme-dependent regulatory role in the cell.</text>
</comment>
<comment type="catalytic activity">
    <reaction evidence="1">
        <text>heme b + 3 reduced [NADPH--hemoprotein reductase] + 3 O2 = biliverdin IXalpha + CO + Fe(2+) + 3 oxidized [NADPH--hemoprotein reductase] + 3 H2O + H(+)</text>
        <dbReference type="Rhea" id="RHEA:21764"/>
        <dbReference type="Rhea" id="RHEA-COMP:11964"/>
        <dbReference type="Rhea" id="RHEA-COMP:11965"/>
        <dbReference type="ChEBI" id="CHEBI:15377"/>
        <dbReference type="ChEBI" id="CHEBI:15378"/>
        <dbReference type="ChEBI" id="CHEBI:15379"/>
        <dbReference type="ChEBI" id="CHEBI:17245"/>
        <dbReference type="ChEBI" id="CHEBI:29033"/>
        <dbReference type="ChEBI" id="CHEBI:57618"/>
        <dbReference type="ChEBI" id="CHEBI:57991"/>
        <dbReference type="ChEBI" id="CHEBI:58210"/>
        <dbReference type="ChEBI" id="CHEBI:60344"/>
        <dbReference type="EC" id="1.14.14.18"/>
    </reaction>
</comment>
<comment type="tissue specificity">
    <text>Found in the spleen, liver, thymus, prostate, heart, kidney, brain and testis.</text>
</comment>
<comment type="similarity">
    <text evidence="3">Belongs to the heme oxygenase family.</text>
</comment>
<comment type="caution">
    <text evidence="4">Could be the product of a pseudogene. Encoded by a single-exon gene, absent in other mammals, including mouse, and not supported by EST data. Expression could not be detected at the mRNA level in a genomic DNA-free liver library, nor at the protein level in kidney (PubMed:15246535).</text>
</comment>
<evidence type="ECO:0000250" key="1">
    <source>
        <dbReference type="UniProtKB" id="O48782"/>
    </source>
</evidence>
<evidence type="ECO:0000256" key="2">
    <source>
        <dbReference type="SAM" id="MobiDB-lite"/>
    </source>
</evidence>
<evidence type="ECO:0000305" key="3"/>
<evidence type="ECO:0000305" key="4">
    <source>
    </source>
</evidence>
<keyword id="KW-0349">Heme</keyword>
<keyword id="KW-0408">Iron</keyword>
<keyword id="KW-0479">Metal-binding</keyword>
<keyword id="KW-0560">Oxidoreductase</keyword>
<keyword id="KW-1185">Reference proteome</keyword>
<keyword id="KW-0677">Repeat</keyword>
<dbReference type="EC" id="1.14.14.18" evidence="1"/>
<dbReference type="EMBL" id="AF058787">
    <property type="protein sequence ID" value="AAC14142.1"/>
    <property type="molecule type" value="mRNA"/>
</dbReference>
<dbReference type="SMR" id="O70453"/>
<dbReference type="FunCoup" id="O70453">
    <property type="interactions" value="83"/>
</dbReference>
<dbReference type="AGR" id="RGD:2323099"/>
<dbReference type="RGD" id="1565339">
    <property type="gene designation" value="Hmox3"/>
</dbReference>
<dbReference type="InParanoid" id="O70453"/>
<dbReference type="PhylomeDB" id="O70453"/>
<dbReference type="Proteomes" id="UP000002494">
    <property type="component" value="Unplaced"/>
</dbReference>
<dbReference type="GO" id="GO:0020037">
    <property type="term" value="F:heme binding"/>
    <property type="evidence" value="ECO:0000318"/>
    <property type="project" value="GO_Central"/>
</dbReference>
<dbReference type="GO" id="GO:0004392">
    <property type="term" value="F:heme oxygenase (decyclizing) activity"/>
    <property type="evidence" value="ECO:0000318"/>
    <property type="project" value="GO_Central"/>
</dbReference>
<dbReference type="GO" id="GO:0046872">
    <property type="term" value="F:metal ion binding"/>
    <property type="evidence" value="ECO:0007669"/>
    <property type="project" value="UniProtKB-KW"/>
</dbReference>
<dbReference type="GO" id="GO:0042167">
    <property type="term" value="P:heme catabolic process"/>
    <property type="evidence" value="ECO:0000318"/>
    <property type="project" value="GO_Central"/>
</dbReference>
<dbReference type="GO" id="GO:0006788">
    <property type="term" value="P:heme oxidation"/>
    <property type="evidence" value="ECO:0000318"/>
    <property type="project" value="GO_Central"/>
</dbReference>
<dbReference type="GO" id="GO:0006979">
    <property type="term" value="P:response to oxidative stress"/>
    <property type="evidence" value="ECO:0000318"/>
    <property type="project" value="GO_Central"/>
</dbReference>
<dbReference type="CDD" id="cd19165">
    <property type="entry name" value="HemeO"/>
    <property type="match status" value="1"/>
</dbReference>
<dbReference type="Gene3D" id="1.20.910.10">
    <property type="entry name" value="Heme oxygenase-like"/>
    <property type="match status" value="1"/>
</dbReference>
<dbReference type="InterPro" id="IPR002051">
    <property type="entry name" value="Haem_Oase"/>
</dbReference>
<dbReference type="InterPro" id="IPR016053">
    <property type="entry name" value="Haem_Oase-like"/>
</dbReference>
<dbReference type="InterPro" id="IPR016084">
    <property type="entry name" value="Haem_Oase-like_multi-hlx"/>
</dbReference>
<dbReference type="InterPro" id="IPR018207">
    <property type="entry name" value="Haem_oxygenase_CS"/>
</dbReference>
<dbReference type="PANTHER" id="PTHR10720">
    <property type="entry name" value="HEME OXYGENASE"/>
    <property type="match status" value="1"/>
</dbReference>
<dbReference type="PANTHER" id="PTHR10720:SF2">
    <property type="entry name" value="HEME OXYGENASE 2"/>
    <property type="match status" value="1"/>
</dbReference>
<dbReference type="Pfam" id="PF01126">
    <property type="entry name" value="Heme_oxygenase"/>
    <property type="match status" value="1"/>
</dbReference>
<dbReference type="SUPFAM" id="SSF48613">
    <property type="entry name" value="Heme oxygenase-like"/>
    <property type="match status" value="1"/>
</dbReference>
<dbReference type="PROSITE" id="PS00593">
    <property type="entry name" value="HEME_OXYGENASE"/>
    <property type="match status" value="1"/>
</dbReference>
<feature type="chain" id="PRO_0000209695" description="Putative heme oxygenase 3">
    <location>
        <begin position="1"/>
        <end position="290"/>
    </location>
</feature>
<feature type="repeat" description="HRM 1">
    <location>
        <begin position="238"/>
        <end position="243"/>
    </location>
</feature>
<feature type="repeat" description="HRM 2">
    <location>
        <begin position="255"/>
        <end position="260"/>
    </location>
</feature>
<feature type="region of interest" description="Disordered" evidence="2">
    <location>
        <begin position="1"/>
        <end position="33"/>
    </location>
</feature>
<feature type="compositionally biased region" description="Acidic residues" evidence="2">
    <location>
        <begin position="1"/>
        <end position="12"/>
    </location>
</feature>
<feature type="compositionally biased region" description="Basic and acidic residues" evidence="2">
    <location>
        <begin position="13"/>
        <end position="33"/>
    </location>
</feature>
<accession>O70453</accession>
<sequence>MSSEVETAEAVDESEKNSMASEKENHSKIADFSDLLKEGTKEADDRAENTQFVKDFLKGNIKKELFKLATTALSYSAPEEEMDSLTKDMEYFFGENWEEKVKCSEAAQTYVDQIHYVGQNEPEHLVAHTYSTYMGGNLSGDQVLKKETQPVPFTREGTQFYLFEHVDNAKQFKLFYCARLNALDLNLKTKERIVEEATKAFEYNMQIFSELDQAGSIPVRETLKNGLSILDGKGGVCKCPFNAAQPDKGTLGGSNCPFQMSMALLRKPNLQLILVASMALVAGLLAWYYM</sequence>
<reference key="1">
    <citation type="journal article" date="1997" name="Eur. J. Biochem.">
        <title>Isolation and characterization of a cDNA from the rat brain that encodes hemoprotein heme oxygenase-3.</title>
        <authorList>
            <person name="McCoubrey W.K. Jr."/>
            <person name="Huang T.J."/>
            <person name="Maines M.D."/>
        </authorList>
    </citation>
    <scope>NUCLEOTIDE SEQUENCE [MRNA]</scope>
    <source>
        <tissue>Brain</tissue>
    </source>
</reference>
<reference key="2">
    <citation type="journal article" date="2004" name="Gene">
        <title>Characterization of rat heme oxygenase-3 gene. Implication of processed pseudogenes derived from heme oxygenase-2 gene.</title>
        <authorList>
            <person name="Hayashi S."/>
            <person name="Omata Y."/>
            <person name="Sakamoto H."/>
            <person name="Higashimoto Y."/>
            <person name="Hara T."/>
            <person name="Sagara Y."/>
            <person name="Noguchi M."/>
        </authorList>
    </citation>
    <scope>IDENTIFICATION AS A PSEUDOGENE</scope>
</reference>
<gene>
    <name type="primary">Hmox3</name>
</gene>